<gene>
    <name type="primary">ANKFY1</name>
    <name type="synonym">ANKHZN</name>
    <name type="synonym">KIAA1255</name>
</gene>
<comment type="function">
    <text evidence="5 6 7">Proposed effector of Rab5. Binds to phosphatidylinositol 3-phosphate (PI(3)P). Involved in homotypic early endosome fusion and to a lesser extent in heterotypic fusion of chlathrin-coated vesicles with early endosomes. Involved in macropinocytosis; the function is dependent on Rab5-GTP. Required for correct endosomal localization. Involved in the internalization and trafficking of activated tyrosine kinase receptors such as PDGFRB. Regulates the subcellular localization of the retromer complex in a EHD1-dependent manner. Involved in endosome-to-Golgi transport and biosynthetic transport to late endosomes and lysosomes indicative for a regulation of retromer complex-mediated retrograde transport.</text>
</comment>
<comment type="subunit">
    <text evidence="5 6 7">Interacts with RAB5A (in GTP-bound form). Interacts with RHOD (independent of GTP-loaded status). Interacts with EHD1. Interacts with VPS26A; the interaction is independent of EHD1 and is indicative for an association with the cargo recognition subcomplex of the retromer complex.</text>
</comment>
<comment type="interaction">
    <interactant intactId="EBI-2513908">
        <id>Q9P2R3</id>
    </interactant>
    <interactant intactId="EBI-490691">
        <id>Q9H4M9</id>
        <label>EHD1</label>
    </interactant>
    <organismsDiffer>false</organismsDiffer>
    <experiments>8</experiments>
</comment>
<comment type="interaction">
    <interactant intactId="EBI-2513908">
        <id>Q9P2R3</id>
    </interactant>
    <interactant intactId="EBI-2870749">
        <id>Q9NZN3</id>
        <label>EHD3</label>
    </interactant>
    <organismsDiffer>false</organismsDiffer>
    <experiments>3</experiments>
</comment>
<comment type="interaction">
    <interactant intactId="EBI-2513908">
        <id>Q9P2R3</id>
    </interactant>
    <interactant intactId="EBI-720116">
        <id>P60520</id>
        <label>GABARAPL2</label>
    </interactant>
    <organismsDiffer>false</organismsDiffer>
    <experiments>2</experiments>
</comment>
<comment type="interaction">
    <interactant intactId="EBI-2513908">
        <id>Q9P2R3</id>
    </interactant>
    <interactant intactId="EBI-399437">
        <id>P20339</id>
        <label>RAB5A</label>
    </interactant>
    <organismsDiffer>false</organismsDiffer>
    <experiments>2</experiments>
</comment>
<comment type="subcellular location">
    <subcellularLocation>
        <location evidence="4">Cytoplasm</location>
    </subcellularLocation>
    <subcellularLocation>
        <location evidence="4">Endosome membrane</location>
        <topology evidence="4">Peripheral membrane protein</topology>
    </subcellularLocation>
    <subcellularLocation>
        <location evidence="5">Early endosome</location>
    </subcellularLocation>
    <text evidence="5">Also associated with endosomal membranes. Localizes to macropinosomes.</text>
</comment>
<comment type="alternative products">
    <event type="alternative splicing"/>
    <isoform>
        <id>Q9P2R3-1</id>
        <name>1</name>
        <sequence type="displayed"/>
    </isoform>
    <isoform>
        <id>Q9P2R3-2</id>
        <name>2</name>
        <sequence type="described" ref="VSP_035607"/>
    </isoform>
    <isoform>
        <id>Q9P2R3-4</id>
        <name>4</name>
        <sequence type="described" ref="VSP_041447"/>
    </isoform>
</comment>
<comment type="tissue specificity">
    <text evidence="3 4">High expression in whole adult brain and intermediate expression in all other tissues and specific brain regions examined, including fetal brain.</text>
</comment>
<comment type="sequence caution" evidence="13">
    <conflict type="miscellaneous discrepancy">
        <sequence resource="EMBL-CDS" id="AAH52308"/>
    </conflict>
    <text>Intron retention.</text>
</comment>
<comment type="sequence caution" evidence="13">
    <conflict type="erroneous initiation">
        <sequence resource="EMBL-CDS" id="BAA86569"/>
    </conflict>
    <text>Extended N-terminus.</text>
</comment>
<dbReference type="EMBL" id="AB037360">
    <property type="protein sequence ID" value="BAA90300.1"/>
    <property type="molecule type" value="mRNA"/>
</dbReference>
<dbReference type="EMBL" id="AB033081">
    <property type="protein sequence ID" value="BAA86569.2"/>
    <property type="status" value="ALT_INIT"/>
    <property type="molecule type" value="mRNA"/>
</dbReference>
<dbReference type="EMBL" id="AK292930">
    <property type="protein sequence ID" value="BAF85619.1"/>
    <property type="molecule type" value="mRNA"/>
</dbReference>
<dbReference type="EMBL" id="AC087292">
    <property type="status" value="NOT_ANNOTATED_CDS"/>
    <property type="molecule type" value="Genomic_DNA"/>
</dbReference>
<dbReference type="EMBL" id="AC087742">
    <property type="status" value="NOT_ANNOTATED_CDS"/>
    <property type="molecule type" value="Genomic_DNA"/>
</dbReference>
<dbReference type="EMBL" id="CH471108">
    <property type="protein sequence ID" value="EAW90448.1"/>
    <property type="molecule type" value="Genomic_DNA"/>
</dbReference>
<dbReference type="EMBL" id="BC052308">
    <property type="protein sequence ID" value="AAH52308.1"/>
    <property type="status" value="ALT_SEQ"/>
    <property type="molecule type" value="mRNA"/>
</dbReference>
<dbReference type="CCDS" id="CCDS42236.1">
    <molecule id="Q9P2R3-2"/>
</dbReference>
<dbReference type="CCDS" id="CCDS58502.1">
    <molecule id="Q9P2R3-4"/>
</dbReference>
<dbReference type="CCDS" id="CCDS82038.1">
    <molecule id="Q9P2R3-1"/>
</dbReference>
<dbReference type="RefSeq" id="NP_001244928.1">
    <molecule id="Q9P2R3-4"/>
    <property type="nucleotide sequence ID" value="NM_001257999.3"/>
</dbReference>
<dbReference type="RefSeq" id="NP_001316992.1">
    <molecule id="Q9P2R3-1"/>
    <property type="nucleotide sequence ID" value="NM_001330063.2"/>
</dbReference>
<dbReference type="RefSeq" id="NP_057460.3">
    <molecule id="Q9P2R3-2"/>
    <property type="nucleotide sequence ID" value="NM_016376.4"/>
</dbReference>
<dbReference type="SMR" id="Q9P2R3"/>
<dbReference type="BioGRID" id="119564">
    <property type="interactions" value="265"/>
</dbReference>
<dbReference type="DIP" id="DIP-46068N"/>
<dbReference type="FunCoup" id="Q9P2R3">
    <property type="interactions" value="3866"/>
</dbReference>
<dbReference type="IntAct" id="Q9P2R3">
    <property type="interactions" value="45"/>
</dbReference>
<dbReference type="MINT" id="Q9P2R3"/>
<dbReference type="STRING" id="9606.ENSP00000459943"/>
<dbReference type="GlyGen" id="Q9P2R3">
    <property type="glycosylation" value="2 sites, 1 N-linked glycan (1 site), 1 O-linked glycan (1 site)"/>
</dbReference>
<dbReference type="iPTMnet" id="Q9P2R3"/>
<dbReference type="MetOSite" id="Q9P2R3"/>
<dbReference type="PhosphoSitePlus" id="Q9P2R3"/>
<dbReference type="SwissPalm" id="Q9P2R3"/>
<dbReference type="BioMuta" id="ANKFY1"/>
<dbReference type="DMDM" id="33514905"/>
<dbReference type="jPOST" id="Q9P2R3"/>
<dbReference type="MassIVE" id="Q9P2R3"/>
<dbReference type="PaxDb" id="9606-ENSP00000459943"/>
<dbReference type="PeptideAtlas" id="Q9P2R3"/>
<dbReference type="ProteomicsDB" id="83880">
    <molecule id="Q9P2R3-1"/>
</dbReference>
<dbReference type="ProteomicsDB" id="83881">
    <molecule id="Q9P2R3-2"/>
</dbReference>
<dbReference type="ProteomicsDB" id="83882">
    <molecule id="Q9P2R3-4"/>
</dbReference>
<dbReference type="Pumba" id="Q9P2R3"/>
<dbReference type="Antibodypedia" id="5541">
    <property type="antibodies" value="92 antibodies from 19 providers"/>
</dbReference>
<dbReference type="DNASU" id="51479"/>
<dbReference type="Ensembl" id="ENST00000341657.9">
    <molecule id="Q9P2R3-1"/>
    <property type="protein sequence ID" value="ENSP00000343362.4"/>
    <property type="gene ID" value="ENSG00000185722.18"/>
</dbReference>
<dbReference type="Ensembl" id="ENST00000570535.5">
    <molecule id="Q9P2R3-4"/>
    <property type="protein sequence ID" value="ENSP00000459943.1"/>
    <property type="gene ID" value="ENSG00000185722.18"/>
</dbReference>
<dbReference type="Ensembl" id="ENST00000574367.5">
    <molecule id="Q9P2R3-2"/>
    <property type="protein sequence ID" value="ENSP00000459775.1"/>
    <property type="gene ID" value="ENSG00000185722.18"/>
</dbReference>
<dbReference type="Ensembl" id="ENST00000648043.1">
    <molecule id="Q9P2R3-1"/>
    <property type="protein sequence ID" value="ENSP00000497187.1"/>
    <property type="gene ID" value="ENSG00000185722.18"/>
</dbReference>
<dbReference type="GeneID" id="51479"/>
<dbReference type="KEGG" id="hsa:51479"/>
<dbReference type="MANE-Select" id="ENST00000341657.9">
    <property type="protein sequence ID" value="ENSP00000343362.4"/>
    <property type="RefSeq nucleotide sequence ID" value="NM_001330063.2"/>
    <property type="RefSeq protein sequence ID" value="NP_001316992.1"/>
</dbReference>
<dbReference type="UCSC" id="uc002fxn.4">
    <molecule id="Q9P2R3-1"/>
    <property type="organism name" value="human"/>
</dbReference>
<dbReference type="AGR" id="HGNC:20763"/>
<dbReference type="CTD" id="51479"/>
<dbReference type="DisGeNET" id="51479"/>
<dbReference type="GeneCards" id="ANKFY1"/>
<dbReference type="HGNC" id="HGNC:20763">
    <property type="gene designation" value="ANKFY1"/>
</dbReference>
<dbReference type="HPA" id="ENSG00000185722">
    <property type="expression patterns" value="Low tissue specificity"/>
</dbReference>
<dbReference type="MalaCards" id="ANKFY1"/>
<dbReference type="MIM" id="607927">
    <property type="type" value="gene"/>
</dbReference>
<dbReference type="neXtProt" id="NX_Q9P2R3"/>
<dbReference type="OpenTargets" id="ENSG00000185722"/>
<dbReference type="Orphanet" id="656">
    <property type="disease" value="Hereditary steroid-resistant nephrotic syndrome"/>
</dbReference>
<dbReference type="PharmGKB" id="PA134984226"/>
<dbReference type="VEuPathDB" id="HostDB:ENSG00000185722"/>
<dbReference type="eggNOG" id="KOG0504">
    <property type="taxonomic scope" value="Eukaryota"/>
</dbReference>
<dbReference type="eggNOG" id="KOG4591">
    <property type="taxonomic scope" value="Eukaryota"/>
</dbReference>
<dbReference type="GeneTree" id="ENSGT00940000156179"/>
<dbReference type="HOGENOM" id="CLU_010618_0_0_1"/>
<dbReference type="InParanoid" id="Q9P2R3"/>
<dbReference type="OMA" id="WGLEQVV"/>
<dbReference type="OrthoDB" id="2306477at2759"/>
<dbReference type="PAN-GO" id="Q9P2R3">
    <property type="GO annotations" value="4 GO annotations based on evolutionary models"/>
</dbReference>
<dbReference type="PhylomeDB" id="Q9P2R3"/>
<dbReference type="TreeFam" id="TF351263"/>
<dbReference type="PathwayCommons" id="Q9P2R3"/>
<dbReference type="Reactome" id="R-HSA-9013405">
    <property type="pathway name" value="RHOD GTPase cycle"/>
</dbReference>
<dbReference type="SignaLink" id="Q9P2R3"/>
<dbReference type="SIGNOR" id="Q9P2R3"/>
<dbReference type="BioGRID-ORCS" id="51479">
    <property type="hits" value="21 hits in 1198 CRISPR screens"/>
</dbReference>
<dbReference type="CD-CODE" id="FB4E32DD">
    <property type="entry name" value="Presynaptic clusters and postsynaptic densities"/>
</dbReference>
<dbReference type="ChiTaRS" id="ANKFY1">
    <property type="organism name" value="human"/>
</dbReference>
<dbReference type="GeneWiki" id="ANKFY1"/>
<dbReference type="GenomeRNAi" id="51479"/>
<dbReference type="Pharos" id="Q9P2R3">
    <property type="development level" value="Tbio"/>
</dbReference>
<dbReference type="PRO" id="PR:Q9P2R3"/>
<dbReference type="Proteomes" id="UP000005640">
    <property type="component" value="Chromosome 17"/>
</dbReference>
<dbReference type="RNAct" id="Q9P2R3">
    <property type="molecule type" value="protein"/>
</dbReference>
<dbReference type="Bgee" id="ENSG00000185722">
    <property type="expression patterns" value="Expressed in skin of hip and 183 other cell types or tissues"/>
</dbReference>
<dbReference type="ExpressionAtlas" id="Q9P2R3">
    <property type="expression patterns" value="baseline and differential"/>
</dbReference>
<dbReference type="GO" id="GO:0005829">
    <property type="term" value="C:cytosol"/>
    <property type="evidence" value="ECO:0007669"/>
    <property type="project" value="GOC"/>
</dbReference>
<dbReference type="GO" id="GO:0005769">
    <property type="term" value="C:early endosome"/>
    <property type="evidence" value="ECO:0000314"/>
    <property type="project" value="UniProtKB"/>
</dbReference>
<dbReference type="GO" id="GO:0005768">
    <property type="term" value="C:endosome"/>
    <property type="evidence" value="ECO:0000314"/>
    <property type="project" value="HPA"/>
</dbReference>
<dbReference type="GO" id="GO:0010008">
    <property type="term" value="C:endosome membrane"/>
    <property type="evidence" value="ECO:0000250"/>
    <property type="project" value="UniProtKB"/>
</dbReference>
<dbReference type="GO" id="GO:0070062">
    <property type="term" value="C:extracellular exosome"/>
    <property type="evidence" value="ECO:0007005"/>
    <property type="project" value="UniProtKB"/>
</dbReference>
<dbReference type="GO" id="GO:0043231">
    <property type="term" value="C:intracellular membrane-bounded organelle"/>
    <property type="evidence" value="ECO:0000314"/>
    <property type="project" value="HPA"/>
</dbReference>
<dbReference type="GO" id="GO:0005765">
    <property type="term" value="C:lysosomal membrane"/>
    <property type="evidence" value="ECO:0007005"/>
    <property type="project" value="UniProtKB"/>
</dbReference>
<dbReference type="GO" id="GO:0044354">
    <property type="term" value="C:macropinosome"/>
    <property type="evidence" value="ECO:0000314"/>
    <property type="project" value="UniProtKB"/>
</dbReference>
<dbReference type="GO" id="GO:0016020">
    <property type="term" value="C:membrane"/>
    <property type="evidence" value="ECO:0000314"/>
    <property type="project" value="UniProtKB"/>
</dbReference>
<dbReference type="GO" id="GO:1901981">
    <property type="term" value="F:phosphatidylinositol phosphate binding"/>
    <property type="evidence" value="ECO:0000314"/>
    <property type="project" value="UniProtKB"/>
</dbReference>
<dbReference type="GO" id="GO:0031267">
    <property type="term" value="F:small GTPase binding"/>
    <property type="evidence" value="ECO:0000314"/>
    <property type="project" value="UniProtKB"/>
</dbReference>
<dbReference type="GO" id="GO:0008270">
    <property type="term" value="F:zinc ion binding"/>
    <property type="evidence" value="ECO:0007669"/>
    <property type="project" value="UniProtKB-KW"/>
</dbReference>
<dbReference type="GO" id="GO:0006897">
    <property type="term" value="P:endocytosis"/>
    <property type="evidence" value="ECO:0007669"/>
    <property type="project" value="UniProtKB-KW"/>
</dbReference>
<dbReference type="GO" id="GO:0016197">
    <property type="term" value="P:endosomal transport"/>
    <property type="evidence" value="ECO:0000315"/>
    <property type="project" value="UniProtKB"/>
</dbReference>
<dbReference type="GO" id="GO:0034058">
    <property type="term" value="P:endosomal vesicle fusion"/>
    <property type="evidence" value="ECO:0000314"/>
    <property type="project" value="UniProtKB"/>
</dbReference>
<dbReference type="GO" id="GO:0090160">
    <property type="term" value="P:Golgi to lysosome transport"/>
    <property type="evidence" value="ECO:0000315"/>
    <property type="project" value="UniProtKB"/>
</dbReference>
<dbReference type="GO" id="GO:0048549">
    <property type="term" value="P:positive regulation of pinocytosis"/>
    <property type="evidence" value="ECO:0000314"/>
    <property type="project" value="UniProtKB"/>
</dbReference>
<dbReference type="GO" id="GO:0042147">
    <property type="term" value="P:retrograde transport, endosome to Golgi"/>
    <property type="evidence" value="ECO:0000315"/>
    <property type="project" value="UniProtKB"/>
</dbReference>
<dbReference type="CDD" id="cd18501">
    <property type="entry name" value="BACK_ANKFY1_Rank5"/>
    <property type="match status" value="1"/>
</dbReference>
<dbReference type="CDD" id="cd18303">
    <property type="entry name" value="BTB_POZ_Rank-5"/>
    <property type="match status" value="1"/>
</dbReference>
<dbReference type="CDD" id="cd15728">
    <property type="entry name" value="FYVE_ANFY1"/>
    <property type="match status" value="1"/>
</dbReference>
<dbReference type="FunFam" id="1.25.40.20:FF:000116">
    <property type="entry name" value="Ankyrin repeat and FYVE domain containing 1"/>
    <property type="match status" value="1"/>
</dbReference>
<dbReference type="FunFam" id="1.25.40.20:FF:000142">
    <property type="entry name" value="Ankyrin repeat and FYVE domain containing 1"/>
    <property type="match status" value="1"/>
</dbReference>
<dbReference type="FunFam" id="1.25.40.20:FF:000184">
    <property type="entry name" value="Ankyrin repeat and FYVE domain containing 1"/>
    <property type="match status" value="1"/>
</dbReference>
<dbReference type="FunFam" id="1.25.40.20:FF:000210">
    <property type="entry name" value="Ankyrin repeat and FYVE domain containing 1"/>
    <property type="match status" value="1"/>
</dbReference>
<dbReference type="FunFam" id="3.30.40.10:FF:000104">
    <property type="entry name" value="Ankyrin repeat and FYVE domain-containing 1"/>
    <property type="match status" value="1"/>
</dbReference>
<dbReference type="FunFam" id="3.30.710.10:FF:000086">
    <property type="entry name" value="Ankyrin repeat and FYVE domain-containing 1"/>
    <property type="match status" value="1"/>
</dbReference>
<dbReference type="FunFam" id="1.25.40.20:FF:000166">
    <property type="entry name" value="rabankyrin-5 isoform X1"/>
    <property type="match status" value="1"/>
</dbReference>
<dbReference type="FunFam" id="1.25.40.20:FF:000469">
    <property type="entry name" value="rabankyrin-5 isoform X1"/>
    <property type="match status" value="1"/>
</dbReference>
<dbReference type="Gene3D" id="1.25.40.20">
    <property type="entry name" value="Ankyrin repeat-containing domain"/>
    <property type="match status" value="6"/>
</dbReference>
<dbReference type="Gene3D" id="3.30.710.10">
    <property type="entry name" value="Potassium Channel Kv1.1, Chain A"/>
    <property type="match status" value="1"/>
</dbReference>
<dbReference type="Gene3D" id="3.30.40.10">
    <property type="entry name" value="Zinc/RING finger domain, C3HC4 (zinc finger)"/>
    <property type="match status" value="1"/>
</dbReference>
<dbReference type="InterPro" id="IPR049765">
    <property type="entry name" value="ANFY1_BTB_POZ"/>
</dbReference>
<dbReference type="InterPro" id="IPR049764">
    <property type="entry name" value="ANFY1_FYVE"/>
</dbReference>
<dbReference type="InterPro" id="IPR049763">
    <property type="entry name" value="ANKFY1_BACK"/>
</dbReference>
<dbReference type="InterPro" id="IPR002110">
    <property type="entry name" value="Ankyrin_rpt"/>
</dbReference>
<dbReference type="InterPro" id="IPR036770">
    <property type="entry name" value="Ankyrin_rpt-contain_sf"/>
</dbReference>
<dbReference type="InterPro" id="IPR000210">
    <property type="entry name" value="BTB/POZ_dom"/>
</dbReference>
<dbReference type="InterPro" id="IPR051165">
    <property type="entry name" value="Multifunctional_ANK_Repeat"/>
</dbReference>
<dbReference type="InterPro" id="IPR011333">
    <property type="entry name" value="SKP1/BTB/POZ_sf"/>
</dbReference>
<dbReference type="InterPro" id="IPR000306">
    <property type="entry name" value="Znf_FYVE"/>
</dbReference>
<dbReference type="InterPro" id="IPR017455">
    <property type="entry name" value="Znf_FYVE-rel"/>
</dbReference>
<dbReference type="InterPro" id="IPR011011">
    <property type="entry name" value="Znf_FYVE_PHD"/>
</dbReference>
<dbReference type="InterPro" id="IPR013083">
    <property type="entry name" value="Znf_RING/FYVE/PHD"/>
</dbReference>
<dbReference type="PANTHER" id="PTHR24123:SF141">
    <property type="entry name" value="ANKYRIN 2, ISOFORM U"/>
    <property type="match status" value="1"/>
</dbReference>
<dbReference type="PANTHER" id="PTHR24123">
    <property type="entry name" value="ANKYRIN REPEAT-CONTAINING"/>
    <property type="match status" value="1"/>
</dbReference>
<dbReference type="Pfam" id="PF00023">
    <property type="entry name" value="Ank"/>
    <property type="match status" value="1"/>
</dbReference>
<dbReference type="Pfam" id="PF12796">
    <property type="entry name" value="Ank_2"/>
    <property type="match status" value="5"/>
</dbReference>
<dbReference type="Pfam" id="PF13637">
    <property type="entry name" value="Ank_4"/>
    <property type="match status" value="1"/>
</dbReference>
<dbReference type="Pfam" id="PF00651">
    <property type="entry name" value="BTB"/>
    <property type="match status" value="1"/>
</dbReference>
<dbReference type="Pfam" id="PF01363">
    <property type="entry name" value="FYVE"/>
    <property type="match status" value="1"/>
</dbReference>
<dbReference type="PRINTS" id="PR01415">
    <property type="entry name" value="ANKYRIN"/>
</dbReference>
<dbReference type="SMART" id="SM00248">
    <property type="entry name" value="ANK"/>
    <property type="match status" value="21"/>
</dbReference>
<dbReference type="SMART" id="SM00225">
    <property type="entry name" value="BTB"/>
    <property type="match status" value="1"/>
</dbReference>
<dbReference type="SMART" id="SM00064">
    <property type="entry name" value="FYVE"/>
    <property type="match status" value="1"/>
</dbReference>
<dbReference type="SUPFAM" id="SSF48403">
    <property type="entry name" value="Ankyrin repeat"/>
    <property type="match status" value="3"/>
</dbReference>
<dbReference type="SUPFAM" id="SSF57903">
    <property type="entry name" value="FYVE/PHD zinc finger"/>
    <property type="match status" value="1"/>
</dbReference>
<dbReference type="SUPFAM" id="SSF54695">
    <property type="entry name" value="POZ domain"/>
    <property type="match status" value="1"/>
</dbReference>
<dbReference type="PROSITE" id="PS50297">
    <property type="entry name" value="ANK_REP_REGION"/>
    <property type="match status" value="1"/>
</dbReference>
<dbReference type="PROSITE" id="PS50088">
    <property type="entry name" value="ANK_REPEAT"/>
    <property type="match status" value="12"/>
</dbReference>
<dbReference type="PROSITE" id="PS50097">
    <property type="entry name" value="BTB"/>
    <property type="match status" value="1"/>
</dbReference>
<dbReference type="PROSITE" id="PS50178">
    <property type="entry name" value="ZF_FYVE"/>
    <property type="match status" value="1"/>
</dbReference>
<name>ANFY1_HUMAN</name>
<organism>
    <name type="scientific">Homo sapiens</name>
    <name type="common">Human</name>
    <dbReference type="NCBI Taxonomy" id="9606"/>
    <lineage>
        <taxon>Eukaryota</taxon>
        <taxon>Metazoa</taxon>
        <taxon>Chordata</taxon>
        <taxon>Craniata</taxon>
        <taxon>Vertebrata</taxon>
        <taxon>Euteleostomi</taxon>
        <taxon>Mammalia</taxon>
        <taxon>Eutheria</taxon>
        <taxon>Euarchontoglires</taxon>
        <taxon>Primates</taxon>
        <taxon>Haplorrhini</taxon>
        <taxon>Catarrhini</taxon>
        <taxon>Hominidae</taxon>
        <taxon>Homo</taxon>
    </lineage>
</organism>
<feature type="initiator methionine" description="Removed" evidence="8">
    <location>
        <position position="1"/>
    </location>
</feature>
<feature type="chain" id="PRO_0000066890" description="Rabankyrin-5">
    <location>
        <begin position="2"/>
        <end position="1169"/>
    </location>
</feature>
<feature type="domain" description="BTB" evidence="1">
    <location>
        <begin position="68"/>
        <end position="130"/>
    </location>
</feature>
<feature type="repeat" description="ANK 1">
    <location>
        <begin position="217"/>
        <end position="247"/>
    </location>
</feature>
<feature type="repeat" description="ANK 2">
    <location>
        <begin position="255"/>
        <end position="284"/>
    </location>
</feature>
<feature type="repeat" description="ANK 3">
    <location>
        <begin position="288"/>
        <end position="317"/>
    </location>
</feature>
<feature type="repeat" description="ANK 4">
    <location>
        <begin position="322"/>
        <end position="362"/>
    </location>
</feature>
<feature type="repeat" description="ANK 5">
    <location>
        <begin position="366"/>
        <end position="396"/>
    </location>
</feature>
<feature type="repeat" description="ANK 6">
    <location>
        <begin position="490"/>
        <end position="519"/>
    </location>
</feature>
<feature type="repeat" description="ANK 7">
    <location>
        <begin position="542"/>
        <end position="572"/>
    </location>
</feature>
<feature type="repeat" description="ANK 8">
    <location>
        <begin position="588"/>
        <end position="617"/>
    </location>
</feature>
<feature type="repeat" description="ANK 9">
    <location>
        <begin position="621"/>
        <end position="650"/>
    </location>
</feature>
<feature type="repeat" description="ANK 10">
    <location>
        <begin position="654"/>
        <end position="683"/>
    </location>
</feature>
<feature type="repeat" description="ANK 11">
    <location>
        <begin position="687"/>
        <end position="716"/>
    </location>
</feature>
<feature type="repeat" description="ANK 12">
    <location>
        <begin position="724"/>
        <end position="753"/>
    </location>
</feature>
<feature type="repeat" description="ANK 13">
    <location>
        <begin position="769"/>
        <end position="798"/>
    </location>
</feature>
<feature type="repeat" description="ANK 14">
    <location>
        <begin position="802"/>
        <end position="832"/>
    </location>
</feature>
<feature type="repeat" description="ANK 15">
    <location>
        <begin position="836"/>
        <end position="865"/>
    </location>
</feature>
<feature type="repeat" description="ANK 16">
    <location>
        <begin position="870"/>
        <end position="899"/>
    </location>
</feature>
<feature type="repeat" description="ANK 17">
    <location>
        <begin position="905"/>
        <end position="934"/>
    </location>
</feature>
<feature type="repeat" description="ANK 18">
    <location>
        <begin position="938"/>
        <end position="967"/>
    </location>
</feature>
<feature type="repeat" description="ANK 19">
    <location>
        <begin position="971"/>
        <end position="1001"/>
    </location>
</feature>
<feature type="repeat" description="ANK 20">
    <location>
        <begin position="1005"/>
        <end position="1037"/>
    </location>
</feature>
<feature type="repeat" description="ANK 21">
    <location>
        <begin position="1043"/>
        <end position="1072"/>
    </location>
</feature>
<feature type="zinc finger region" description="FYVE-type" evidence="2">
    <location>
        <begin position="1104"/>
        <end position="1164"/>
    </location>
</feature>
<feature type="region of interest" description="Interaction with RHOD and RAB5A" evidence="7">
    <location>
        <begin position="650"/>
        <end position="759"/>
    </location>
</feature>
<feature type="short sequence motif" description="NPF">
    <location>
        <begin position="421"/>
        <end position="423"/>
    </location>
</feature>
<feature type="binding site" evidence="2">
    <location>
        <position position="1110"/>
    </location>
    <ligand>
        <name>Zn(2+)</name>
        <dbReference type="ChEBI" id="CHEBI:29105"/>
        <label>1</label>
    </ligand>
</feature>
<feature type="binding site" evidence="2">
    <location>
        <position position="1113"/>
    </location>
    <ligand>
        <name>Zn(2+)</name>
        <dbReference type="ChEBI" id="CHEBI:29105"/>
        <label>1</label>
    </ligand>
</feature>
<feature type="binding site" evidence="2">
    <location>
        <position position="1126"/>
    </location>
    <ligand>
        <name>Zn(2+)</name>
        <dbReference type="ChEBI" id="CHEBI:29105"/>
        <label>2</label>
    </ligand>
</feature>
<feature type="binding site" evidence="2">
    <location>
        <position position="1129"/>
    </location>
    <ligand>
        <name>Zn(2+)</name>
        <dbReference type="ChEBI" id="CHEBI:29105"/>
        <label>2</label>
    </ligand>
</feature>
<feature type="binding site" evidence="2">
    <location>
        <position position="1134"/>
    </location>
    <ligand>
        <name>Zn(2+)</name>
        <dbReference type="ChEBI" id="CHEBI:29105"/>
        <label>1</label>
    </ligand>
</feature>
<feature type="binding site" evidence="2">
    <location>
        <position position="1137"/>
    </location>
    <ligand>
        <name>Zn(2+)</name>
        <dbReference type="ChEBI" id="CHEBI:29105"/>
        <label>1</label>
    </ligand>
</feature>
<feature type="binding site" evidence="2">
    <location>
        <position position="1156"/>
    </location>
    <ligand>
        <name>Zn(2+)</name>
        <dbReference type="ChEBI" id="CHEBI:29105"/>
        <label>2</label>
    </ligand>
</feature>
<feature type="binding site" evidence="2">
    <location>
        <position position="1159"/>
    </location>
    <ligand>
        <name>Zn(2+)</name>
        <dbReference type="ChEBI" id="CHEBI:29105"/>
        <label>2</label>
    </ligand>
</feature>
<feature type="modified residue" description="N-acetylalanine" evidence="8">
    <location>
        <position position="2"/>
    </location>
</feature>
<feature type="modified residue" description="Phosphoserine" evidence="14">
    <location>
        <position position="270"/>
    </location>
</feature>
<feature type="splice variant" id="VSP_041447" description="In isoform 4." evidence="9">
    <original>MAEE</original>
    <variation>MPTPRDCGRLRSRAGRSRAGAACSRGAPRAAREALDCRRCRDAGGK</variation>
    <location>
        <begin position="1"/>
        <end position="4"/>
    </location>
</feature>
<feature type="splice variant" id="VSP_035607" description="In isoform 2." evidence="10">
    <original>V</original>
    <variation>VS</variation>
    <location>
        <position position="650"/>
    </location>
</feature>
<feature type="mutagenesis site" description="Disrupts interaction with EHD1." evidence="6">
    <original>NPF</original>
    <variation>APA</variation>
    <location>
        <begin position="421"/>
        <end position="423"/>
    </location>
</feature>
<feature type="mutagenesis site" description="Decreases interaction with EHD1." evidence="6">
    <original>ED</original>
    <variation>AA</variation>
    <location>
        <begin position="424"/>
        <end position="425"/>
    </location>
</feature>
<feature type="sequence conflict" description="In Ref. 1; BAA90300." evidence="13" ref="1">
    <original>E</original>
    <variation>K</variation>
    <location>
        <position position="48"/>
    </location>
</feature>
<feature type="sequence conflict" description="In Ref. 1; BAA90300." evidence="13" ref="1">
    <original>M</original>
    <variation>V</variation>
    <location>
        <position position="115"/>
    </location>
</feature>
<feature type="sequence conflict" description="In Ref. 1; BAA90300." evidence="13" ref="1">
    <original>A</original>
    <variation>P</variation>
    <location>
        <position position="207"/>
    </location>
</feature>
<feature type="sequence conflict" description="In Ref. 1; BAA90300." evidence="13" ref="1">
    <original>F</original>
    <variation>S</variation>
    <location>
        <position position="235"/>
    </location>
</feature>
<feature type="sequence conflict" description="In Ref. 1; BAA90300." evidence="13" ref="1">
    <original>S</original>
    <variation>N</variation>
    <location>
        <position position="270"/>
    </location>
</feature>
<feature type="sequence conflict" description="In Ref. 1; BAA90300." evidence="13" ref="1">
    <original>DMVDKSGWS</original>
    <variation>AWWPRVLE</variation>
    <location>
        <begin position="283"/>
        <end position="291"/>
    </location>
</feature>
<feature type="sequence conflict" description="In Ref. 1; BAA90300." evidence="13" ref="1">
    <original>RG</original>
    <variation>E</variation>
    <location>
        <begin position="299"/>
        <end position="300"/>
    </location>
</feature>
<feature type="sequence conflict" description="In Ref. 1; BAA90300." evidence="13" ref="1">
    <original>A</original>
    <variation>C</variation>
    <location>
        <position position="322"/>
    </location>
</feature>
<feature type="sequence conflict" description="In Ref. 1; BAA90300." evidence="13" ref="1">
    <original>KK</original>
    <variation>RN</variation>
    <location>
        <begin position="336"/>
        <end position="337"/>
    </location>
</feature>
<feature type="sequence conflict" description="In Ref. 1; BAA90300." evidence="13" ref="1">
    <original>N</original>
    <variation>D</variation>
    <location>
        <position position="379"/>
    </location>
</feature>
<feature type="sequence conflict" description="In Ref. 1; BAA90300." evidence="13" ref="1">
    <original>Q</original>
    <variation>H</variation>
    <location>
        <position position="385"/>
    </location>
</feature>
<feature type="sequence conflict" description="In Ref. 1; BAA90300." evidence="13" ref="1">
    <original>Q</original>
    <variation>R</variation>
    <location>
        <position position="645"/>
    </location>
</feature>
<feature type="sequence conflict" description="In Ref. 1; BAA90300." evidence="13" ref="1">
    <original>TQD</original>
    <variation>PQA</variation>
    <location>
        <begin position="652"/>
        <end position="654"/>
    </location>
</feature>
<feature type="sequence conflict" description="In Ref. 1; BAA90300." evidence="13" ref="1">
    <original>K</original>
    <variation>E</variation>
    <location>
        <position position="687"/>
    </location>
</feature>
<feature type="sequence conflict" description="In Ref. 1; BAA90300." evidence="13" ref="1">
    <original>D</original>
    <variation>G</variation>
    <location>
        <position position="713"/>
    </location>
</feature>
<feature type="sequence conflict" description="In Ref. 1; BAA90300." evidence="13" ref="1">
    <location>
        <position position="784"/>
    </location>
</feature>
<feature type="sequence conflict" description="In Ref. 1; BAA90300." evidence="13" ref="1">
    <original>N</original>
    <variation>D</variation>
    <location>
        <position position="795"/>
    </location>
</feature>
<feature type="sequence conflict" description="In Ref. 1; BAA90300." evidence="13" ref="1">
    <original>A</original>
    <variation>P</variation>
    <location>
        <position position="798"/>
    </location>
</feature>
<feature type="sequence conflict" description="In Ref. 1; BAA90300." evidence="13" ref="1">
    <original>I</original>
    <variation>C</variation>
    <location>
        <position position="807"/>
    </location>
</feature>
<feature type="sequence conflict" description="In Ref. 1; BAA90300." evidence="13" ref="1">
    <original>DIH</original>
    <variation>ISS</variation>
    <location>
        <begin position="827"/>
        <end position="829"/>
    </location>
</feature>
<feature type="sequence conflict" description="In Ref. 1; BAA90300." evidence="13" ref="1">
    <original>R</original>
    <variation>K</variation>
    <location>
        <position position="835"/>
    </location>
</feature>
<feature type="sequence conflict" description="In Ref. 1; BAA90300." evidence="13" ref="1">
    <original>N</original>
    <variation>D</variation>
    <location>
        <position position="849"/>
    </location>
</feature>
<feature type="sequence conflict" description="In Ref. 1; BAA90300." evidence="13" ref="1">
    <original>E</original>
    <variation>G</variation>
    <location>
        <position position="860"/>
    </location>
</feature>
<feature type="sequence conflict" description="In Ref. 1; BAA90300." evidence="13" ref="1">
    <original>F</original>
    <variation>S</variation>
    <location>
        <position position="874"/>
    </location>
</feature>
<feature type="sequence conflict" description="In Ref. 1; BAA90300." evidence="13" ref="1">
    <original>F</original>
    <variation>S</variation>
    <location>
        <position position="889"/>
    </location>
</feature>
<feature type="sequence conflict" description="In Ref. 1; BAA90300." evidence="13" ref="1">
    <original>V</original>
    <variation>A</variation>
    <location>
        <position position="901"/>
    </location>
</feature>
<feature type="sequence conflict" description="In Ref. 1; BAA90300." evidence="13" ref="1">
    <original>S</original>
    <variation>P</variation>
    <location>
        <position position="905"/>
    </location>
</feature>
<feature type="sequence conflict" description="In Ref. 1; BAA90300." evidence="13" ref="1">
    <original>A</original>
    <variation>V</variation>
    <location>
        <position position="913"/>
    </location>
</feature>
<feature type="sequence conflict" description="In Ref. 1; BAA90300." evidence="13" ref="1">
    <original>A</original>
    <variation>E</variation>
    <location>
        <position position="916"/>
    </location>
</feature>
<feature type="sequence conflict" description="In Ref. 1; BAA90300." evidence="13" ref="1">
    <original>N</original>
    <variation>T</variation>
    <location>
        <position position="933"/>
    </location>
</feature>
<feature type="sequence conflict" description="In Ref. 1; BAA90300." evidence="13" ref="1">
    <original>Q</original>
    <variation>K</variation>
    <location>
        <position position="940"/>
    </location>
</feature>
<feature type="sequence conflict" description="In Ref. 1; BAA90300." evidence="13" ref="1">
    <original>Q</original>
    <variation>E</variation>
    <location>
        <position position="949"/>
    </location>
</feature>
<feature type="sequence conflict" description="In Ref. 1; BAA90300." evidence="13" ref="1">
    <original>G</original>
    <variation>A</variation>
    <location>
        <position position="962"/>
    </location>
</feature>
<feature type="sequence conflict" description="In Ref. 1; BAA90300." evidence="13" ref="1">
    <original>T</original>
    <variation>A</variation>
    <location>
        <position position="1120"/>
    </location>
</feature>
<feature type="sequence conflict" description="In Ref. 1; BAA90300." evidence="13" ref="1">
    <original>N</original>
    <variation>T</variation>
    <location>
        <position position="1157"/>
    </location>
</feature>
<accession>Q9P2R3</accession>
<accession>A8KA65</accession>
<accession>Q5RKV4</accession>
<accession>Q9ULG5</accession>
<protein>
    <recommendedName>
        <fullName evidence="11">Rabankyrin-5</fullName>
        <shortName evidence="12">Rank-5</shortName>
    </recommendedName>
    <alternativeName>
        <fullName>Ankyrin repeat and FYVE domain-containing protein 1</fullName>
    </alternativeName>
    <alternativeName>
        <fullName>Ankyrin repeats hooked to a zinc finger motif</fullName>
    </alternativeName>
</protein>
<proteinExistence type="evidence at protein level"/>
<sequence>MAEEEVAKLEKHLMLLRQEYVKLQKKLAETEKRCALLAAQANKESSSESFISRLLAIVADLYEQEQYSDLKIKVGDRHISAHKFVLAARSDSWSLANLSSTKELDLSDANPEVTMTMLRWIYTDELEFREDDVFLTELMKLANRFQLQLLRERCEKGVMSLVNVRNCIRFYQTAEELNASTLMNYCAEIIASHWDDLRKEDFSSMSAQLLYKMIKSKTEYPLHKAIKVEREDVVFLYLIEMDSQLPGKLNEADHNGDLALDLALSRRLESIATTLVSHKADVDMVDKSGWSLLHKGIQRGDLFAATFLIKNGAFVNAATLGAQETPLHLVALYSSKKHSADVMSEMAQIAEALLQAGANPNMQDSKGRTPLHVSIMAGNEYVFSQLLQCKQLDLELKDHEGSTALWLAVQHITVSSDQSVNPFEDVPVVNGTSFDENSFAARLIQRGSHTDAPDTATGNCLLQRAAGAGNEAAALFLATNGAHVNHRNKWGETPLHTACRHGLANLTAELLQQGANPNLQTEEALPLPKEAASLTSLADSVHLQTPLHMAIAYNHPDVVSVILEQKANALHATNNLQIIPDFSLKDSRDQTVLGLALWTGMHTIAAQLLGSGAAINDTMSDGQTLLHMAIQRQDSKSALFLLEHQADINVRTQDGETALQLAIRNQLPLVVDAICTRGADMSVPDEKGNPPLWLALANNLEDIASTLVRHGCDATCWGPGPGGCLQTLLHRAIDENNEPTACFLIRSGCDVNSPRQPGANGEGEEEARDGQTPLHLAASWGLEETVQCLLEFGANVNAQDAEGRTPIHVAISSQHGVIIQLLVSHPDIHLNVRDRQGLTPFACAMTFKNNKSAEAILKRESGAAEQVDNKGRNFLHVAVQNSDIESVLFLISVHANVNSRVQDASKLTPLHLAVQAGSEIIVRNLLLAGAKVNELTKHRQTALHLAAQQDLPTICSVLLENGVDFAAVDENGNNALHLAVMHGRLNNIRVLLTECTVDAEAFNLRGQSPLHILGQYGKENAAAIFDLFLECMPGYPLDKPDADGSTVLLLAYMKGNANLCRAIVRSGARLGVNNNQGVNIFNYQVATKQLLFRLLDMLSKEPPWCDGSYCYECTARFGVTTRKHHCRHCGRLLCHKCSTKEIPIIKFDLNKPVRVCNICFDVLTLGGVS</sequence>
<reference key="1">
    <citation type="journal article" date="2000" name="Gene">
        <title>Characterization and chromosomal mapping of a novel human gene, ANKHZN.</title>
        <authorList>
            <person name="Kuriyama H."/>
            <person name="Asakawa S."/>
            <person name="Minoshima S."/>
            <person name="Maruyama H."/>
            <person name="Ishii N."/>
            <person name="Ito K."/>
            <person name="Gejyo F."/>
            <person name="Arakawa M."/>
            <person name="Shimizu N."/>
            <person name="Kuwano R."/>
        </authorList>
    </citation>
    <scope>NUCLEOTIDE SEQUENCE [MRNA] (ISOFORM 1)</scope>
    <scope>SUBCELLULAR LOCATION</scope>
    <scope>TISSUE SPECIFICITY</scope>
    <source>
        <tissue>Fetal brain</tissue>
    </source>
</reference>
<reference key="2">
    <citation type="journal article" date="1999" name="DNA Res.">
        <title>Prediction of the coding sequences of unidentified human genes. XV. The complete sequences of 100 new cDNA clones from brain which code for large proteins in vitro.</title>
        <authorList>
            <person name="Nagase T."/>
            <person name="Ishikawa K."/>
            <person name="Kikuno R."/>
            <person name="Hirosawa M."/>
            <person name="Nomura N."/>
            <person name="Ohara O."/>
        </authorList>
    </citation>
    <scope>NUCLEOTIDE SEQUENCE [LARGE SCALE MRNA] (ISOFORM 4)</scope>
    <scope>TISSUE SPECIFICITY</scope>
    <source>
        <tissue>Brain</tissue>
    </source>
</reference>
<reference key="3">
    <citation type="journal article" date="2002" name="DNA Res.">
        <title>Construction of expression-ready cDNA clones for KIAA genes: manual curation of 330 KIAA cDNA clones.</title>
        <authorList>
            <person name="Nakajima D."/>
            <person name="Okazaki N."/>
            <person name="Yamakawa H."/>
            <person name="Kikuno R."/>
            <person name="Ohara O."/>
            <person name="Nagase T."/>
        </authorList>
    </citation>
    <scope>SEQUENCE REVISION</scope>
</reference>
<reference key="4">
    <citation type="journal article" date="2004" name="Nat. Genet.">
        <title>Complete sequencing and characterization of 21,243 full-length human cDNAs.</title>
        <authorList>
            <person name="Ota T."/>
            <person name="Suzuki Y."/>
            <person name="Nishikawa T."/>
            <person name="Otsuki T."/>
            <person name="Sugiyama T."/>
            <person name="Irie R."/>
            <person name="Wakamatsu A."/>
            <person name="Hayashi K."/>
            <person name="Sato H."/>
            <person name="Nagai K."/>
            <person name="Kimura K."/>
            <person name="Makita H."/>
            <person name="Sekine M."/>
            <person name="Obayashi M."/>
            <person name="Nishi T."/>
            <person name="Shibahara T."/>
            <person name="Tanaka T."/>
            <person name="Ishii S."/>
            <person name="Yamamoto J."/>
            <person name="Saito K."/>
            <person name="Kawai Y."/>
            <person name="Isono Y."/>
            <person name="Nakamura Y."/>
            <person name="Nagahari K."/>
            <person name="Murakami K."/>
            <person name="Yasuda T."/>
            <person name="Iwayanagi T."/>
            <person name="Wagatsuma M."/>
            <person name="Shiratori A."/>
            <person name="Sudo H."/>
            <person name="Hosoiri T."/>
            <person name="Kaku Y."/>
            <person name="Kodaira H."/>
            <person name="Kondo H."/>
            <person name="Sugawara M."/>
            <person name="Takahashi M."/>
            <person name="Kanda K."/>
            <person name="Yokoi T."/>
            <person name="Furuya T."/>
            <person name="Kikkawa E."/>
            <person name="Omura Y."/>
            <person name="Abe K."/>
            <person name="Kamihara K."/>
            <person name="Katsuta N."/>
            <person name="Sato K."/>
            <person name="Tanikawa M."/>
            <person name="Yamazaki M."/>
            <person name="Ninomiya K."/>
            <person name="Ishibashi T."/>
            <person name="Yamashita H."/>
            <person name="Murakawa K."/>
            <person name="Fujimori K."/>
            <person name="Tanai H."/>
            <person name="Kimata M."/>
            <person name="Watanabe M."/>
            <person name="Hiraoka S."/>
            <person name="Chiba Y."/>
            <person name="Ishida S."/>
            <person name="Ono Y."/>
            <person name="Takiguchi S."/>
            <person name="Watanabe S."/>
            <person name="Yosida M."/>
            <person name="Hotuta T."/>
            <person name="Kusano J."/>
            <person name="Kanehori K."/>
            <person name="Takahashi-Fujii A."/>
            <person name="Hara H."/>
            <person name="Tanase T.-O."/>
            <person name="Nomura Y."/>
            <person name="Togiya S."/>
            <person name="Komai F."/>
            <person name="Hara R."/>
            <person name="Takeuchi K."/>
            <person name="Arita M."/>
            <person name="Imose N."/>
            <person name="Musashino K."/>
            <person name="Yuuki H."/>
            <person name="Oshima A."/>
            <person name="Sasaki N."/>
            <person name="Aotsuka S."/>
            <person name="Yoshikawa Y."/>
            <person name="Matsunawa H."/>
            <person name="Ichihara T."/>
            <person name="Shiohata N."/>
            <person name="Sano S."/>
            <person name="Moriya S."/>
            <person name="Momiyama H."/>
            <person name="Satoh N."/>
            <person name="Takami S."/>
            <person name="Terashima Y."/>
            <person name="Suzuki O."/>
            <person name="Nakagawa S."/>
            <person name="Senoh A."/>
            <person name="Mizoguchi H."/>
            <person name="Goto Y."/>
            <person name="Shimizu F."/>
            <person name="Wakebe H."/>
            <person name="Hishigaki H."/>
            <person name="Watanabe T."/>
            <person name="Sugiyama A."/>
            <person name="Takemoto M."/>
            <person name="Kawakami B."/>
            <person name="Yamazaki M."/>
            <person name="Watanabe K."/>
            <person name="Kumagai A."/>
            <person name="Itakura S."/>
            <person name="Fukuzumi Y."/>
            <person name="Fujimori Y."/>
            <person name="Komiyama M."/>
            <person name="Tashiro H."/>
            <person name="Tanigami A."/>
            <person name="Fujiwara T."/>
            <person name="Ono T."/>
            <person name="Yamada K."/>
            <person name="Fujii Y."/>
            <person name="Ozaki K."/>
            <person name="Hirao M."/>
            <person name="Ohmori Y."/>
            <person name="Kawabata A."/>
            <person name="Hikiji T."/>
            <person name="Kobatake N."/>
            <person name="Inagaki H."/>
            <person name="Ikema Y."/>
            <person name="Okamoto S."/>
            <person name="Okitani R."/>
            <person name="Kawakami T."/>
            <person name="Noguchi S."/>
            <person name="Itoh T."/>
            <person name="Shigeta K."/>
            <person name="Senba T."/>
            <person name="Matsumura K."/>
            <person name="Nakajima Y."/>
            <person name="Mizuno T."/>
            <person name="Morinaga M."/>
            <person name="Sasaki M."/>
            <person name="Togashi T."/>
            <person name="Oyama M."/>
            <person name="Hata H."/>
            <person name="Watanabe M."/>
            <person name="Komatsu T."/>
            <person name="Mizushima-Sugano J."/>
            <person name="Satoh T."/>
            <person name="Shirai Y."/>
            <person name="Takahashi Y."/>
            <person name="Nakagawa K."/>
            <person name="Okumura K."/>
            <person name="Nagase T."/>
            <person name="Nomura N."/>
            <person name="Kikuchi H."/>
            <person name="Masuho Y."/>
            <person name="Yamashita R."/>
            <person name="Nakai K."/>
            <person name="Yada T."/>
            <person name="Nakamura Y."/>
            <person name="Ohara O."/>
            <person name="Isogai T."/>
            <person name="Sugano S."/>
        </authorList>
    </citation>
    <scope>NUCLEOTIDE SEQUENCE [LARGE SCALE MRNA] (ISOFORM 2)</scope>
    <source>
        <tissue>Trachea</tissue>
    </source>
</reference>
<reference key="5">
    <citation type="journal article" date="2006" name="Nature">
        <title>DNA sequence of human chromosome 17 and analysis of rearrangement in the human lineage.</title>
        <authorList>
            <person name="Zody M.C."/>
            <person name="Garber M."/>
            <person name="Adams D.J."/>
            <person name="Sharpe T."/>
            <person name="Harrow J."/>
            <person name="Lupski J.R."/>
            <person name="Nicholson C."/>
            <person name="Searle S.M."/>
            <person name="Wilming L."/>
            <person name="Young S.K."/>
            <person name="Abouelleil A."/>
            <person name="Allen N.R."/>
            <person name="Bi W."/>
            <person name="Bloom T."/>
            <person name="Borowsky M.L."/>
            <person name="Bugalter B.E."/>
            <person name="Butler J."/>
            <person name="Chang J.L."/>
            <person name="Chen C.-K."/>
            <person name="Cook A."/>
            <person name="Corum B."/>
            <person name="Cuomo C.A."/>
            <person name="de Jong P.J."/>
            <person name="DeCaprio D."/>
            <person name="Dewar K."/>
            <person name="FitzGerald M."/>
            <person name="Gilbert J."/>
            <person name="Gibson R."/>
            <person name="Gnerre S."/>
            <person name="Goldstein S."/>
            <person name="Grafham D.V."/>
            <person name="Grocock R."/>
            <person name="Hafez N."/>
            <person name="Hagopian D.S."/>
            <person name="Hart E."/>
            <person name="Norman C.H."/>
            <person name="Humphray S."/>
            <person name="Jaffe D.B."/>
            <person name="Jones M."/>
            <person name="Kamal M."/>
            <person name="Khodiyar V.K."/>
            <person name="LaButti K."/>
            <person name="Laird G."/>
            <person name="Lehoczky J."/>
            <person name="Liu X."/>
            <person name="Lokyitsang T."/>
            <person name="Loveland J."/>
            <person name="Lui A."/>
            <person name="Macdonald P."/>
            <person name="Major J.E."/>
            <person name="Matthews L."/>
            <person name="Mauceli E."/>
            <person name="McCarroll S.A."/>
            <person name="Mihalev A.H."/>
            <person name="Mudge J."/>
            <person name="Nguyen C."/>
            <person name="Nicol R."/>
            <person name="O'Leary S.B."/>
            <person name="Osoegawa K."/>
            <person name="Schwartz D.C."/>
            <person name="Shaw-Smith C."/>
            <person name="Stankiewicz P."/>
            <person name="Steward C."/>
            <person name="Swarbreck D."/>
            <person name="Venkataraman V."/>
            <person name="Whittaker C.A."/>
            <person name="Yang X."/>
            <person name="Zimmer A.R."/>
            <person name="Bradley A."/>
            <person name="Hubbard T."/>
            <person name="Birren B.W."/>
            <person name="Rogers J."/>
            <person name="Lander E.S."/>
            <person name="Nusbaum C."/>
        </authorList>
    </citation>
    <scope>NUCLEOTIDE SEQUENCE [LARGE SCALE GENOMIC DNA]</scope>
</reference>
<reference key="6">
    <citation type="submission" date="2005-07" db="EMBL/GenBank/DDBJ databases">
        <authorList>
            <person name="Mural R.J."/>
            <person name="Istrail S."/>
            <person name="Sutton G.G."/>
            <person name="Florea L."/>
            <person name="Halpern A.L."/>
            <person name="Mobarry C.M."/>
            <person name="Lippert R."/>
            <person name="Walenz B."/>
            <person name="Shatkay H."/>
            <person name="Dew I."/>
            <person name="Miller J.R."/>
            <person name="Flanigan M.J."/>
            <person name="Edwards N.J."/>
            <person name="Bolanos R."/>
            <person name="Fasulo D."/>
            <person name="Halldorsson B.V."/>
            <person name="Hannenhalli S."/>
            <person name="Turner R."/>
            <person name="Yooseph S."/>
            <person name="Lu F."/>
            <person name="Nusskern D.R."/>
            <person name="Shue B.C."/>
            <person name="Zheng X.H."/>
            <person name="Zhong F."/>
            <person name="Delcher A.L."/>
            <person name="Huson D.H."/>
            <person name="Kravitz S.A."/>
            <person name="Mouchard L."/>
            <person name="Reinert K."/>
            <person name="Remington K.A."/>
            <person name="Clark A.G."/>
            <person name="Waterman M.S."/>
            <person name="Eichler E.E."/>
            <person name="Adams M.D."/>
            <person name="Hunkapiller M.W."/>
            <person name="Myers E.W."/>
            <person name="Venter J.C."/>
        </authorList>
    </citation>
    <scope>NUCLEOTIDE SEQUENCE [LARGE SCALE GENOMIC DNA]</scope>
</reference>
<reference key="7">
    <citation type="journal article" date="2004" name="Genome Res.">
        <title>The status, quality, and expansion of the NIH full-length cDNA project: the Mammalian Gene Collection (MGC).</title>
        <authorList>
            <consortium name="The MGC Project Team"/>
        </authorList>
    </citation>
    <scope>NUCLEOTIDE SEQUENCE [LARGE SCALE MRNA] OF 1-458 (ISOFORM 1)</scope>
    <source>
        <tissue>Mammary gland</tissue>
    </source>
</reference>
<reference key="8">
    <citation type="submission" date="2008-03" db="UniProtKB">
        <authorList>
            <person name="Bienvenut W.V."/>
            <person name="Vousden K.H."/>
            <person name="Lukashchuk N."/>
        </authorList>
    </citation>
    <scope>PROTEIN SEQUENCE OF 2-11; 145-151 AND 924-931</scope>
    <scope>CLEAVAGE OF INITIATOR METHIONINE</scope>
    <scope>ACETYLATION AT ALA-2</scope>
    <scope>IDENTIFICATION BY MASS SPECTROMETRY</scope>
    <source>
        <tissue>Lung carcinoma</tissue>
    </source>
</reference>
<reference key="9">
    <citation type="journal article" date="2004" name="PLoS Biol.">
        <title>The Rab5 effector Rabankyrin-5 regulates and coordinates different endocytic mechanisms.</title>
        <authorList>
            <person name="Schnatwinkel C."/>
            <person name="Christoforidis S."/>
            <person name="Lindsay M.R."/>
            <person name="Uttenweiler-Joseph S."/>
            <person name="Wilm M."/>
            <person name="Parton R.G."/>
            <person name="Zerial M."/>
        </authorList>
    </citation>
    <scope>FUNCTION</scope>
    <scope>INTERACTION WITH RAB5A</scope>
    <scope>SUBCELLULAR LOCATION</scope>
</reference>
<reference key="10">
    <citation type="journal article" date="2011" name="BMC Syst. Biol.">
        <title>Initial characterization of the human central proteome.</title>
        <authorList>
            <person name="Burkard T.R."/>
            <person name="Planyavsky M."/>
            <person name="Kaupe I."/>
            <person name="Breitwieser F.P."/>
            <person name="Buerckstuemmer T."/>
            <person name="Bennett K.L."/>
            <person name="Superti-Furga G."/>
            <person name="Colinge J."/>
        </authorList>
    </citation>
    <scope>IDENTIFICATION BY MASS SPECTROMETRY [LARGE SCALE ANALYSIS]</scope>
</reference>
<reference key="11">
    <citation type="journal article" date="2012" name="Traffic">
        <title>Rabankyrin-5 interacts with EHD1 and Vps26 to regulate endocytic trafficking and retromer function.</title>
        <authorList>
            <person name="Zhang J."/>
            <person name="Reiling C."/>
            <person name="Reinecke J.B."/>
            <person name="Prislan I."/>
            <person name="Marky L.A."/>
            <person name="Sorgen P.L."/>
            <person name="Naslavsky N."/>
            <person name="Caplan S."/>
        </authorList>
    </citation>
    <scope>FUNCTION</scope>
    <scope>INTERACTION WITH EHD1 AND VPS26A</scope>
    <scope>MUTAGENESIS OF 421-ASN--PHE-423 AND 424-GLU-ASP-425</scope>
</reference>
<reference key="12">
    <citation type="journal article" date="2013" name="J. Proteome Res.">
        <title>Toward a comprehensive characterization of a human cancer cell phosphoproteome.</title>
        <authorList>
            <person name="Zhou H."/>
            <person name="Di Palma S."/>
            <person name="Preisinger C."/>
            <person name="Peng M."/>
            <person name="Polat A.N."/>
            <person name="Heck A.J."/>
            <person name="Mohammed S."/>
        </authorList>
    </citation>
    <scope>PHOSPHORYLATION [LARGE SCALE ANALYSIS] AT SER-270</scope>
    <scope>IDENTIFICATION BY MASS SPECTROMETRY [LARGE SCALE ANALYSIS]</scope>
    <source>
        <tissue>Cervix carcinoma</tissue>
    </source>
</reference>
<reference key="13">
    <citation type="journal article" date="2013" name="Traffic">
        <title>RhoD binds the Rab5 effector Rabankyrin-5 and has a role in trafficking of the platelet-derived growth factor receptor.</title>
        <authorList>
            <person name="Nehru V."/>
            <person name="Voytyuk O."/>
            <person name="Lennartsson J."/>
            <person name="Aspenstroem P."/>
        </authorList>
    </citation>
    <scope>FUNCTION IN ENDOSOMAL TRAFFICKING AND RECEPTOR INTERNALIZATION</scope>
    <scope>INTERACTION WITH RHOD</scope>
</reference>
<reference key="14">
    <citation type="journal article" date="2014" name="J. Proteomics">
        <title>An enzyme assisted RP-RPLC approach for in-depth analysis of human liver phosphoproteome.</title>
        <authorList>
            <person name="Bian Y."/>
            <person name="Song C."/>
            <person name="Cheng K."/>
            <person name="Dong M."/>
            <person name="Wang F."/>
            <person name="Huang J."/>
            <person name="Sun D."/>
            <person name="Wang L."/>
            <person name="Ye M."/>
            <person name="Zou H."/>
        </authorList>
    </citation>
    <scope>IDENTIFICATION BY MASS SPECTROMETRY [LARGE SCALE ANALYSIS]</scope>
    <source>
        <tissue>Liver</tissue>
    </source>
</reference>
<evidence type="ECO:0000255" key="1">
    <source>
        <dbReference type="PROSITE-ProRule" id="PRU00037"/>
    </source>
</evidence>
<evidence type="ECO:0000255" key="2">
    <source>
        <dbReference type="PROSITE-ProRule" id="PRU00091"/>
    </source>
</evidence>
<evidence type="ECO:0000269" key="3">
    <source>
    </source>
</evidence>
<evidence type="ECO:0000269" key="4">
    <source>
    </source>
</evidence>
<evidence type="ECO:0000269" key="5">
    <source>
    </source>
</evidence>
<evidence type="ECO:0000269" key="6">
    <source>
    </source>
</evidence>
<evidence type="ECO:0000269" key="7">
    <source>
    </source>
</evidence>
<evidence type="ECO:0000269" key="8">
    <source ref="8"/>
</evidence>
<evidence type="ECO:0000303" key="9">
    <source>
    </source>
</evidence>
<evidence type="ECO:0000303" key="10">
    <source>
    </source>
</evidence>
<evidence type="ECO:0000303" key="11">
    <source>
    </source>
</evidence>
<evidence type="ECO:0000303" key="12">
    <source>
    </source>
</evidence>
<evidence type="ECO:0000305" key="13"/>
<evidence type="ECO:0007744" key="14">
    <source>
    </source>
</evidence>
<keyword id="KW-0007">Acetylation</keyword>
<keyword id="KW-0025">Alternative splicing</keyword>
<keyword id="KW-0040">ANK repeat</keyword>
<keyword id="KW-0963">Cytoplasm</keyword>
<keyword id="KW-0903">Direct protein sequencing</keyword>
<keyword id="KW-0254">Endocytosis</keyword>
<keyword id="KW-0967">Endosome</keyword>
<keyword id="KW-0472">Membrane</keyword>
<keyword id="KW-0479">Metal-binding</keyword>
<keyword id="KW-0597">Phosphoprotein</keyword>
<keyword id="KW-1267">Proteomics identification</keyword>
<keyword id="KW-1185">Reference proteome</keyword>
<keyword id="KW-0677">Repeat</keyword>
<keyword id="KW-0862">Zinc</keyword>
<keyword id="KW-0863">Zinc-finger</keyword>